<protein>
    <recommendedName>
        <fullName evidence="13">Calcitonin gene-related peptide type 1 receptor</fullName>
        <shortName evidence="13">CGRP type 1 receptor</shortName>
    </recommendedName>
    <alternativeName>
        <fullName evidence="14">Calcitonin receptor-like receptor</fullName>
        <shortName evidence="14">CRLR</shortName>
    </alternativeName>
</protein>
<proteinExistence type="evidence at protein level"/>
<accession>Q16602</accession>
<accession>A8K6G5</accession>
<accession>A8KAD3</accession>
<accession>Q53S02</accession>
<accession>Q53TS5</accession>
<organism>
    <name type="scientific">Homo sapiens</name>
    <name type="common">Human</name>
    <dbReference type="NCBI Taxonomy" id="9606"/>
    <lineage>
        <taxon>Eukaryota</taxon>
        <taxon>Metazoa</taxon>
        <taxon>Chordata</taxon>
        <taxon>Craniata</taxon>
        <taxon>Vertebrata</taxon>
        <taxon>Euteleostomi</taxon>
        <taxon>Mammalia</taxon>
        <taxon>Eutheria</taxon>
        <taxon>Euarchontoglires</taxon>
        <taxon>Primates</taxon>
        <taxon>Haplorrhini</taxon>
        <taxon>Catarrhini</taxon>
        <taxon>Hominidae</taxon>
        <taxon>Homo</taxon>
    </lineage>
</organism>
<sequence>MEKKCTLYFLVLLPFFMILVTAELEESPEDSIQLGVTRNKIMTAQYECYQKIMQDPIQQAEGVYCNRTWDGWLCWNDVAAGTESMQLCPDYFQDFDPSEKVTKICDQDGNWFRHPASNRTWTNYTQCNVNTHEKVKTALNLFYLTIIGHGLSIASLLISLGIFFYFKSLSCQRITLHKNLFFSFVCNSVVTIIHLTAVANNQALVATNPVSCKVSQFIHLYLMGCNYFWMLCEGIYLHTLIVVAVFAEKQHLMWYYFLGWGFPLIPACIHAIARSLYYNDNCWISSDTHLLYIIHGPICAALLVNLFFLLNIVRVLITKLKVTHQAESNLYMKAVRATLILVPLLGIEFVLIPWRPEGKIAEEVYDYIMHILMHFQGLLVSTIFCFFNGEVQAILRRNWNQYKIQFGNSFSNSEALRSASYTVSTISDGPGYSHDCPSEHLNGKSIHDIENVLLKPENLYN</sequence>
<evidence type="ECO:0000250" key="1">
    <source>
        <dbReference type="UniProtKB" id="Q9R1W5"/>
    </source>
</evidence>
<evidence type="ECO:0000255" key="2"/>
<evidence type="ECO:0000269" key="3">
    <source>
    </source>
</evidence>
<evidence type="ECO:0000269" key="4">
    <source>
    </source>
</evidence>
<evidence type="ECO:0000269" key="5">
    <source>
    </source>
</evidence>
<evidence type="ECO:0000269" key="6">
    <source>
    </source>
</evidence>
<evidence type="ECO:0000269" key="7">
    <source>
    </source>
</evidence>
<evidence type="ECO:0000269" key="8">
    <source>
    </source>
</evidence>
<evidence type="ECO:0000269" key="9">
    <source>
    </source>
</evidence>
<evidence type="ECO:0000269" key="10">
    <source>
    </source>
</evidence>
<evidence type="ECO:0000269" key="11">
    <source>
    </source>
</evidence>
<evidence type="ECO:0000269" key="12">
    <source ref="3"/>
</evidence>
<evidence type="ECO:0000303" key="13">
    <source>
    </source>
</evidence>
<evidence type="ECO:0000303" key="14">
    <source>
    </source>
</evidence>
<evidence type="ECO:0000305" key="15"/>
<evidence type="ECO:0000312" key="16">
    <source>
        <dbReference type="HGNC" id="HGNC:16709"/>
    </source>
</evidence>
<evidence type="ECO:0007744" key="17">
    <source>
        <dbReference type="PDB" id="3AQF"/>
    </source>
</evidence>
<evidence type="ECO:0007744" key="18">
    <source>
        <dbReference type="PDB" id="3N7P"/>
    </source>
</evidence>
<evidence type="ECO:0007744" key="19">
    <source>
        <dbReference type="PDB" id="3N7R"/>
    </source>
</evidence>
<evidence type="ECO:0007744" key="20">
    <source>
        <dbReference type="PDB" id="3N7S"/>
    </source>
</evidence>
<evidence type="ECO:0007744" key="21">
    <source>
        <dbReference type="PDB" id="6UUN"/>
    </source>
</evidence>
<evidence type="ECO:0007744" key="22">
    <source>
        <dbReference type="PDB" id="6UUS"/>
    </source>
</evidence>
<evidence type="ECO:0007744" key="23">
    <source>
        <dbReference type="PDB" id="6UVA"/>
    </source>
</evidence>
<evidence type="ECO:0007744" key="24">
    <source>
        <dbReference type="PDB" id="7KNT"/>
    </source>
</evidence>
<evidence type="ECO:0007744" key="25">
    <source>
        <dbReference type="PDB" id="7KNU"/>
    </source>
</evidence>
<evidence type="ECO:0007829" key="26">
    <source>
        <dbReference type="PDB" id="3N7S"/>
    </source>
</evidence>
<evidence type="ECO:0007829" key="27">
    <source>
        <dbReference type="PDB" id="4RWF"/>
    </source>
</evidence>
<evidence type="ECO:0007829" key="28">
    <source>
        <dbReference type="PDB" id="6E3Y"/>
    </source>
</evidence>
<evidence type="ECO:0007829" key="29">
    <source>
        <dbReference type="PDB" id="6UUN"/>
    </source>
</evidence>
<evidence type="ECO:0007829" key="30">
    <source>
        <dbReference type="PDB" id="6UVA"/>
    </source>
</evidence>
<evidence type="ECO:0007829" key="31">
    <source>
        <dbReference type="PDB" id="6V2E"/>
    </source>
</evidence>
<evidence type="ECO:0007829" key="32">
    <source>
        <dbReference type="PDB" id="6ZHO"/>
    </source>
</evidence>
<evidence type="ECO:0007829" key="33">
    <source>
        <dbReference type="PDB" id="6ZIS"/>
    </source>
</evidence>
<evidence type="ECO:0007829" key="34">
    <source>
        <dbReference type="PDB" id="7KNT"/>
    </source>
</evidence>
<comment type="function">
    <text evidence="7 8 10 11">G protein-coupled receptor which specificity is determined by its interaction with receptor-activity-modifying proteins (RAMPs) (PubMed:32296767, PubMed:33602864, PubMed:8626685). Together with RAMP1, form the receptor complex for calcitonin-gene-related peptides CALCA/CGRP1 and CALCB/CGRP2 (PubMed:33602864). Together with RAMP2 or RAMP3, function as receptor complexes for adrenomedullin (ADM and ADM2) (PubMed:32296767, PubMed:9620797). Ligand binding causes a conformation change that triggers signaling via guanine nucleotide-binding proteins (G proteins) and modulates the activity of downstream effectors. Activates cAMP-dependent pathway (PubMed:32296767, PubMed:8626685).</text>
</comment>
<comment type="subunit">
    <text evidence="4 5 6 7 8">Heterodimer of CALCRL and RAMP1; the receptor complex functions as CGRP receptor (PubMed:20826335, PubMed:33602864). Heterodimer of CALCRL and RAMP2 or CALCRL and RAMP3; the complexes function as adrenomedullin receptor (PubMed:22102369, PubMed:30115739, PubMed:32296767).</text>
</comment>
<comment type="interaction">
    <interactant intactId="EBI-962878">
        <id>Q16602</id>
    </interactant>
    <interactant intactId="EBI-962928">
        <id>P06881</id>
        <label>CALCA</label>
    </interactant>
    <organismsDiffer>false</organismsDiffer>
    <experiments>5</experiments>
</comment>
<comment type="interaction">
    <interactant intactId="EBI-962878">
        <id>Q16602</id>
    </interactant>
    <interactant intactId="EBI-962893">
        <id>O60894</id>
        <label>RAMP1</label>
    </interactant>
    <organismsDiffer>false</organismsDiffer>
    <experiments>4</experiments>
</comment>
<comment type="interaction">
    <interactant intactId="EBI-962878">
        <id>Q16602</id>
    </interactant>
    <interactant intactId="EBI-9009040">
        <id>O60895</id>
        <label>RAMP2</label>
    </interactant>
    <organismsDiffer>false</organismsDiffer>
    <experiments>6</experiments>
</comment>
<comment type="subcellular location">
    <subcellularLocation>
        <location evidence="6">Cell membrane</location>
        <topology evidence="7">Multi-pass membrane protein</topology>
    </subcellularLocation>
</comment>
<comment type="tissue specificity">
    <text evidence="10">Predominantly expressed in the lung and heart.</text>
</comment>
<comment type="disease" evidence="6">
    <disease id="DI-05757">
        <name>Lymphatic malformation 8</name>
        <acronym>LMPHM8</acronym>
        <description>A form of primary lymphedema, a disease characterized by swelling of body parts due to developmental anomalies and functional defects of the lymphatic system. Adult patients with lymphedema may suffer from recurrent local infections. Impaired lymphatic drainage in the fetus can develop into hydrops fetalis, a severe condition characterized by excessive fluid accumulation in more than two fetal extra-vascular compartments and body cavities, placental enlargement and edema, pericardial or pleural effusion, or ascites. LMPHM8 is an autosomal recessive form characterized by onset in utero and fetal death due to non-immune hydrops fetalis.</description>
        <dbReference type="MIM" id="618773"/>
    </disease>
    <text>The disease may be caused by variants affecting the gene represented in this entry.</text>
</comment>
<comment type="similarity">
    <text evidence="15">Belongs to the G-protein coupled receptor 2 family.</text>
</comment>
<comment type="sequence caution" evidence="15">
    <conflict type="erroneous initiation">
        <sequence resource="EMBL-CDS" id="BAF84319"/>
    </conflict>
    <text>Extended N-terminus.</text>
</comment>
<keyword id="KW-0002">3D-structure</keyword>
<keyword id="KW-1003">Cell membrane</keyword>
<keyword id="KW-0903">Direct protein sequencing</keyword>
<keyword id="KW-0225">Disease variant</keyword>
<keyword id="KW-1015">Disulfide bond</keyword>
<keyword id="KW-0297">G-protein coupled receptor</keyword>
<keyword id="KW-0325">Glycoprotein</keyword>
<keyword id="KW-0472">Membrane</keyword>
<keyword id="KW-0597">Phosphoprotein</keyword>
<keyword id="KW-1267">Proteomics identification</keyword>
<keyword id="KW-0675">Receptor</keyword>
<keyword id="KW-1185">Reference proteome</keyword>
<keyword id="KW-0732">Signal</keyword>
<keyword id="KW-0807">Transducer</keyword>
<keyword id="KW-0812">Transmembrane</keyword>
<keyword id="KW-1133">Transmembrane helix</keyword>
<dbReference type="EMBL" id="L76380">
    <property type="protein sequence ID" value="AAC41994.1"/>
    <property type="molecule type" value="mRNA"/>
</dbReference>
<dbReference type="EMBL" id="U17473">
    <property type="protein sequence ID" value="AAA62158.1"/>
    <property type="molecule type" value="mRNA"/>
</dbReference>
<dbReference type="EMBL" id="AY389506">
    <property type="protein sequence ID" value="AAQ91332.1"/>
    <property type="molecule type" value="mRNA"/>
</dbReference>
<dbReference type="EMBL" id="AK291630">
    <property type="protein sequence ID" value="BAF84319.1"/>
    <property type="status" value="ALT_INIT"/>
    <property type="molecule type" value="mRNA"/>
</dbReference>
<dbReference type="EMBL" id="AK292998">
    <property type="protein sequence ID" value="BAF85687.1"/>
    <property type="molecule type" value="mRNA"/>
</dbReference>
<dbReference type="EMBL" id="AC007319">
    <property type="status" value="NOT_ANNOTATED_CDS"/>
    <property type="molecule type" value="Genomic_DNA"/>
</dbReference>
<dbReference type="EMBL" id="AC074020">
    <property type="protein sequence ID" value="AAY14996.1"/>
    <property type="molecule type" value="Genomic_DNA"/>
</dbReference>
<dbReference type="CCDS" id="CCDS2293.1"/>
<dbReference type="PIR" id="JC2477">
    <property type="entry name" value="JC2477"/>
</dbReference>
<dbReference type="RefSeq" id="NP_001258680.1">
    <property type="nucleotide sequence ID" value="NM_001271751.2"/>
</dbReference>
<dbReference type="RefSeq" id="NP_001356363.1">
    <property type="nucleotide sequence ID" value="NM_001369434.1"/>
</dbReference>
<dbReference type="RefSeq" id="NP_001356364.1">
    <property type="nucleotide sequence ID" value="NM_001369435.1"/>
</dbReference>
<dbReference type="RefSeq" id="NP_005786.1">
    <property type="nucleotide sequence ID" value="NM_005795.6"/>
</dbReference>
<dbReference type="PDB" id="3AQF">
    <property type="method" value="X-ray"/>
    <property type="resolution" value="2.60 A"/>
    <property type="chains" value="B=23-136"/>
</dbReference>
<dbReference type="PDB" id="3N7P">
    <property type="method" value="X-ray"/>
    <property type="resolution" value="2.80 A"/>
    <property type="chains" value="A/B/C/J=23-133"/>
</dbReference>
<dbReference type="PDB" id="3N7R">
    <property type="method" value="X-ray"/>
    <property type="resolution" value="2.90 A"/>
    <property type="chains" value="A/B=23-133"/>
</dbReference>
<dbReference type="PDB" id="3N7S">
    <property type="method" value="X-ray"/>
    <property type="resolution" value="2.10 A"/>
    <property type="chains" value="A/B=23-133"/>
</dbReference>
<dbReference type="PDB" id="4RWF">
    <property type="method" value="X-ray"/>
    <property type="resolution" value="1.76 A"/>
    <property type="chains" value="A=31-116"/>
</dbReference>
<dbReference type="PDB" id="4RWG">
    <property type="method" value="X-ray"/>
    <property type="resolution" value="2.44 A"/>
    <property type="chains" value="A/B/C=31-114"/>
</dbReference>
<dbReference type="PDB" id="5V6Y">
    <property type="method" value="X-ray"/>
    <property type="resolution" value="2.80 A"/>
    <property type="chains" value="A/B/C/D=29-144"/>
</dbReference>
<dbReference type="PDB" id="6D1U">
    <property type="method" value="X-ray"/>
    <property type="resolution" value="2.05 A"/>
    <property type="chains" value="A/B/C=29-144"/>
</dbReference>
<dbReference type="PDB" id="6E3Y">
    <property type="method" value="EM"/>
    <property type="resolution" value="3.30 A"/>
    <property type="chains" value="R=22-461"/>
</dbReference>
<dbReference type="PDB" id="6UMG">
    <property type="method" value="X-ray"/>
    <property type="resolution" value="2.70 A"/>
    <property type="chains" value="C/c=23-133"/>
</dbReference>
<dbReference type="PDB" id="6UUN">
    <property type="method" value="EM"/>
    <property type="resolution" value="3.00 A"/>
    <property type="chains" value="R=22-461"/>
</dbReference>
<dbReference type="PDB" id="6UUS">
    <property type="method" value="EM"/>
    <property type="resolution" value="2.40 A"/>
    <property type="chains" value="R=22-461"/>
</dbReference>
<dbReference type="PDB" id="6UVA">
    <property type="method" value="EM"/>
    <property type="resolution" value="2.30 A"/>
    <property type="chains" value="R=22-461"/>
</dbReference>
<dbReference type="PDB" id="6V2E">
    <property type="method" value="X-ray"/>
    <property type="resolution" value="1.83 A"/>
    <property type="chains" value="A=29-144"/>
</dbReference>
<dbReference type="PDB" id="6ZHO">
    <property type="method" value="X-ray"/>
    <property type="resolution" value="1.60 A"/>
    <property type="chains" value="A=34-144"/>
</dbReference>
<dbReference type="PDB" id="6ZIS">
    <property type="method" value="X-ray"/>
    <property type="resolution" value="1.73 A"/>
    <property type="chains" value="A=31-139"/>
</dbReference>
<dbReference type="PDB" id="7KNT">
    <property type="method" value="EM"/>
    <property type="resolution" value="3.15 A"/>
    <property type="chains" value="R=22-461"/>
</dbReference>
<dbReference type="PDB" id="7KNU">
    <property type="method" value="EM"/>
    <property type="resolution" value="3.49 A"/>
    <property type="chains" value="R=22-461"/>
</dbReference>
<dbReference type="PDB" id="7P0F">
    <property type="method" value="X-ray"/>
    <property type="resolution" value="1.85 A"/>
    <property type="chains" value="A=29-144"/>
</dbReference>
<dbReference type="PDB" id="7P0I">
    <property type="method" value="X-ray"/>
    <property type="resolution" value="2.30 A"/>
    <property type="chains" value="A=29-144"/>
</dbReference>
<dbReference type="PDB" id="8AX5">
    <property type="method" value="X-ray"/>
    <property type="resolution" value="2.75 A"/>
    <property type="chains" value="A=29-144"/>
</dbReference>
<dbReference type="PDB" id="8AX6">
    <property type="method" value="X-ray"/>
    <property type="resolution" value="1.90 A"/>
    <property type="chains" value="A=29-144"/>
</dbReference>
<dbReference type="PDB" id="8AX7">
    <property type="method" value="X-ray"/>
    <property type="resolution" value="1.65 A"/>
    <property type="chains" value="A=29-144"/>
</dbReference>
<dbReference type="PDBsum" id="3AQF"/>
<dbReference type="PDBsum" id="3N7P"/>
<dbReference type="PDBsum" id="3N7R"/>
<dbReference type="PDBsum" id="3N7S"/>
<dbReference type="PDBsum" id="4RWF"/>
<dbReference type="PDBsum" id="4RWG"/>
<dbReference type="PDBsum" id="5V6Y"/>
<dbReference type="PDBsum" id="6D1U"/>
<dbReference type="PDBsum" id="6E3Y"/>
<dbReference type="PDBsum" id="6UMG"/>
<dbReference type="PDBsum" id="6UUN"/>
<dbReference type="PDBsum" id="6UUS"/>
<dbReference type="PDBsum" id="6UVA"/>
<dbReference type="PDBsum" id="6V2E"/>
<dbReference type="PDBsum" id="6ZHO"/>
<dbReference type="PDBsum" id="6ZIS"/>
<dbReference type="PDBsum" id="7KNT"/>
<dbReference type="PDBsum" id="7KNU"/>
<dbReference type="PDBsum" id="7P0F"/>
<dbReference type="PDBsum" id="7P0I"/>
<dbReference type="PDBsum" id="8AX5"/>
<dbReference type="PDBsum" id="8AX6"/>
<dbReference type="PDBsum" id="8AX7"/>
<dbReference type="EMDB" id="EMD-20883"/>
<dbReference type="EMDB" id="EMD-20901"/>
<dbReference type="EMDB" id="EMD-20906"/>
<dbReference type="EMDB" id="EMD-22962"/>
<dbReference type="EMDB" id="EMD-22963"/>
<dbReference type="EMDB" id="EMD-8978"/>
<dbReference type="SMR" id="Q16602"/>
<dbReference type="BioGRID" id="115498">
    <property type="interactions" value="7"/>
</dbReference>
<dbReference type="ComplexPortal" id="CPX-2189">
    <property type="entry name" value="CGRP receptor complex"/>
</dbReference>
<dbReference type="ComplexPortal" id="CPX-2191">
    <property type="entry name" value="Adrenomedullin receptor AM1 complex"/>
</dbReference>
<dbReference type="ComplexPortal" id="CPX-3148">
    <property type="entry name" value="Adrenomedullin receptor AM2 complex"/>
</dbReference>
<dbReference type="CORUM" id="Q16602"/>
<dbReference type="DIP" id="DIP-37674N"/>
<dbReference type="FunCoup" id="Q16602">
    <property type="interactions" value="1380"/>
</dbReference>
<dbReference type="IntAct" id="Q16602">
    <property type="interactions" value="4"/>
</dbReference>
<dbReference type="STRING" id="9606.ENSP00000376177"/>
<dbReference type="BindingDB" id="Q16602"/>
<dbReference type="ChEMBL" id="CHEMBL3798"/>
<dbReference type="DrugBank" id="DB16098">
    <property type="generic name" value="Atogepant"/>
</dbReference>
<dbReference type="DrugBank" id="DB14039">
    <property type="generic name" value="Erenumab"/>
</dbReference>
<dbReference type="DrugBank" id="DB12424">
    <property type="generic name" value="MK-3207"/>
</dbReference>
<dbReference type="DrugBank" id="DB04869">
    <property type="generic name" value="Olcegepant"/>
</dbReference>
<dbReference type="DrugBank" id="DB12457">
    <property type="generic name" value="Rimegepant"/>
</dbReference>
<dbReference type="DrugBank" id="DB12228">
    <property type="generic name" value="Telcagepant"/>
</dbReference>
<dbReference type="DrugBank" id="DB15328">
    <property type="generic name" value="Ubrogepant"/>
</dbReference>
<dbReference type="DrugBank" id="DB15688">
    <property type="generic name" value="Zavegepant"/>
</dbReference>
<dbReference type="DrugCentral" id="Q16602"/>
<dbReference type="GuidetoPHARMACOLOGY" id="47"/>
<dbReference type="TCDB" id="9.A.14.4.12">
    <property type="family name" value="the g-protein-coupled receptor (gpcr) family"/>
</dbReference>
<dbReference type="GlyCosmos" id="Q16602">
    <property type="glycosylation" value="3 sites, No reported glycans"/>
</dbReference>
<dbReference type="GlyGen" id="Q16602">
    <property type="glycosylation" value="4 sites, 18 N-linked glycans (2 sites)"/>
</dbReference>
<dbReference type="iPTMnet" id="Q16602"/>
<dbReference type="PhosphoSitePlus" id="Q16602"/>
<dbReference type="BioMuta" id="CALCRL"/>
<dbReference type="DMDM" id="226693507"/>
<dbReference type="MassIVE" id="Q16602"/>
<dbReference type="PaxDb" id="9606-ENSP00000386972"/>
<dbReference type="PeptideAtlas" id="Q16602"/>
<dbReference type="ProteomicsDB" id="60942"/>
<dbReference type="ABCD" id="Q16602">
    <property type="antibodies" value="1 sequenced antibody"/>
</dbReference>
<dbReference type="Antibodypedia" id="1959">
    <property type="antibodies" value="280 antibodies from 33 providers"/>
</dbReference>
<dbReference type="DNASU" id="10203"/>
<dbReference type="Ensembl" id="ENST00000392370.8">
    <property type="protein sequence ID" value="ENSP00000376177.3"/>
    <property type="gene ID" value="ENSG00000064989.13"/>
</dbReference>
<dbReference type="Ensembl" id="ENST00000409998.5">
    <property type="protein sequence ID" value="ENSP00000386972.1"/>
    <property type="gene ID" value="ENSG00000064989.13"/>
</dbReference>
<dbReference type="Ensembl" id="ENST00000410068.5">
    <property type="protein sequence ID" value="ENSP00000387190.1"/>
    <property type="gene ID" value="ENSG00000064989.13"/>
</dbReference>
<dbReference type="GeneID" id="10203"/>
<dbReference type="KEGG" id="hsa:10203"/>
<dbReference type="MANE-Select" id="ENST00000392370.8">
    <property type="protein sequence ID" value="ENSP00000376177.3"/>
    <property type="RefSeq nucleotide sequence ID" value="NM_005795.6"/>
    <property type="RefSeq protein sequence ID" value="NP_005786.1"/>
</dbReference>
<dbReference type="UCSC" id="uc002upv.6">
    <property type="organism name" value="human"/>
</dbReference>
<dbReference type="AGR" id="HGNC:16709"/>
<dbReference type="CTD" id="10203"/>
<dbReference type="DisGeNET" id="10203"/>
<dbReference type="GeneCards" id="CALCRL"/>
<dbReference type="HGNC" id="HGNC:16709">
    <property type="gene designation" value="CALCRL"/>
</dbReference>
<dbReference type="HPA" id="ENSG00000064989">
    <property type="expression patterns" value="Tissue enhanced (adipose tissue, lung)"/>
</dbReference>
<dbReference type="MalaCards" id="CALCRL"/>
<dbReference type="MIM" id="114190">
    <property type="type" value="gene"/>
</dbReference>
<dbReference type="MIM" id="618773">
    <property type="type" value="phenotype"/>
</dbReference>
<dbReference type="neXtProt" id="NX_Q16602"/>
<dbReference type="OpenTargets" id="ENSG00000064989"/>
<dbReference type="Orphanet" id="363999">
    <property type="disease" value="Non-immune hydrops fetalis"/>
</dbReference>
<dbReference type="PharmGKB" id="PA26033"/>
<dbReference type="VEuPathDB" id="HostDB:ENSG00000064989"/>
<dbReference type="eggNOG" id="KOG4564">
    <property type="taxonomic scope" value="Eukaryota"/>
</dbReference>
<dbReference type="GeneTree" id="ENSGT00940000159898"/>
<dbReference type="HOGENOM" id="CLU_002753_4_2_1"/>
<dbReference type="InParanoid" id="Q16602"/>
<dbReference type="OMA" id="LHMNLFS"/>
<dbReference type="OrthoDB" id="16753at2759"/>
<dbReference type="PAN-GO" id="Q16602">
    <property type="GO annotations" value="5 GO annotations based on evolutionary models"/>
</dbReference>
<dbReference type="PhylomeDB" id="Q16602"/>
<dbReference type="TreeFam" id="TF315710"/>
<dbReference type="PathwayCommons" id="Q16602"/>
<dbReference type="Reactome" id="R-HSA-418555">
    <property type="pathway name" value="G alpha (s) signalling events"/>
</dbReference>
<dbReference type="Reactome" id="R-HSA-419812">
    <property type="pathway name" value="Calcitonin-like ligand receptors"/>
</dbReference>
<dbReference type="Reactome" id="R-HSA-9856530">
    <property type="pathway name" value="High laminar flow shear stress activates signaling by PIEZO1 and PECAM1:CDH5:KDR in endothelial cells"/>
</dbReference>
<dbReference type="SignaLink" id="Q16602"/>
<dbReference type="BioGRID-ORCS" id="10203">
    <property type="hits" value="12 hits in 1145 CRISPR screens"/>
</dbReference>
<dbReference type="ChiTaRS" id="CALCRL">
    <property type="organism name" value="human"/>
</dbReference>
<dbReference type="EvolutionaryTrace" id="Q16602"/>
<dbReference type="GeneWiki" id="CALCRL"/>
<dbReference type="GenomeRNAi" id="10203"/>
<dbReference type="Pharos" id="Q16602">
    <property type="development level" value="Tclin"/>
</dbReference>
<dbReference type="PRO" id="PR:Q16602"/>
<dbReference type="Proteomes" id="UP000005640">
    <property type="component" value="Chromosome 2"/>
</dbReference>
<dbReference type="RNAct" id="Q16602">
    <property type="molecule type" value="protein"/>
</dbReference>
<dbReference type="Bgee" id="ENSG00000064989">
    <property type="expression patterns" value="Expressed in right lung and 150 other cell types or tissues"/>
</dbReference>
<dbReference type="ExpressionAtlas" id="Q16602">
    <property type="expression patterns" value="baseline and differential"/>
</dbReference>
<dbReference type="GO" id="GO:1903143">
    <property type="term" value="C:adrenomedullin receptor complex"/>
    <property type="evidence" value="ECO:0000314"/>
    <property type="project" value="UniProtKB"/>
</dbReference>
<dbReference type="GO" id="GO:1990406">
    <property type="term" value="C:CGRP receptor complex"/>
    <property type="evidence" value="ECO:0000314"/>
    <property type="project" value="UniProtKB"/>
</dbReference>
<dbReference type="GO" id="GO:0005737">
    <property type="term" value="C:cytoplasm"/>
    <property type="evidence" value="ECO:0000314"/>
    <property type="project" value="UniProtKB"/>
</dbReference>
<dbReference type="GO" id="GO:0005783">
    <property type="term" value="C:endoplasmic reticulum"/>
    <property type="evidence" value="ECO:0000314"/>
    <property type="project" value="UniProtKB"/>
</dbReference>
<dbReference type="GO" id="GO:0005768">
    <property type="term" value="C:endosome"/>
    <property type="evidence" value="ECO:0000314"/>
    <property type="project" value="UniProtKB"/>
</dbReference>
<dbReference type="GO" id="GO:0005764">
    <property type="term" value="C:lysosome"/>
    <property type="evidence" value="ECO:0000314"/>
    <property type="project" value="UniProtKB"/>
</dbReference>
<dbReference type="GO" id="GO:0005886">
    <property type="term" value="C:plasma membrane"/>
    <property type="evidence" value="ECO:0000314"/>
    <property type="project" value="UniProtKB"/>
</dbReference>
<dbReference type="GO" id="GO:1990409">
    <property type="term" value="F:adrenomedullin binding"/>
    <property type="evidence" value="ECO:0000353"/>
    <property type="project" value="UniProtKB"/>
</dbReference>
<dbReference type="GO" id="GO:0001605">
    <property type="term" value="F:adrenomedullin receptor activity"/>
    <property type="evidence" value="ECO:0000314"/>
    <property type="project" value="UniProt"/>
</dbReference>
<dbReference type="GO" id="GO:0001635">
    <property type="term" value="F:calcitonin gene-related peptide receptor activity"/>
    <property type="evidence" value="ECO:0000314"/>
    <property type="project" value="UniProt"/>
</dbReference>
<dbReference type="GO" id="GO:0004948">
    <property type="term" value="F:calcitonin receptor activity"/>
    <property type="evidence" value="ECO:0007669"/>
    <property type="project" value="InterPro"/>
</dbReference>
<dbReference type="GO" id="GO:0004930">
    <property type="term" value="F:G protein-coupled receptor activity"/>
    <property type="evidence" value="ECO:0000304"/>
    <property type="project" value="ProtInc"/>
</dbReference>
<dbReference type="GO" id="GO:0007189">
    <property type="term" value="P:adenylate cyclase-activating G protein-coupled receptor signaling pathway"/>
    <property type="evidence" value="ECO:0000314"/>
    <property type="project" value="UniProt"/>
</dbReference>
<dbReference type="GO" id="GO:1990410">
    <property type="term" value="P:adrenomedullin receptor signaling pathway"/>
    <property type="evidence" value="ECO:0000314"/>
    <property type="project" value="UniProt"/>
</dbReference>
<dbReference type="GO" id="GO:0001525">
    <property type="term" value="P:angiogenesis"/>
    <property type="evidence" value="ECO:0000314"/>
    <property type="project" value="UniProtKB"/>
</dbReference>
<dbReference type="GO" id="GO:1990408">
    <property type="term" value="P:calcitonin gene-related peptide receptor signaling pathway"/>
    <property type="evidence" value="ECO:0000314"/>
    <property type="project" value="UniProt"/>
</dbReference>
<dbReference type="GO" id="GO:0006816">
    <property type="term" value="P:calcium ion transport"/>
    <property type="evidence" value="ECO:0000314"/>
    <property type="project" value="UniProtKB"/>
</dbReference>
<dbReference type="GO" id="GO:0007166">
    <property type="term" value="P:cell surface receptor signaling pathway"/>
    <property type="evidence" value="ECO:0007669"/>
    <property type="project" value="InterPro"/>
</dbReference>
<dbReference type="GO" id="GO:0071329">
    <property type="term" value="P:cellular response to sucrose stimulus"/>
    <property type="evidence" value="ECO:0000314"/>
    <property type="project" value="UniProtKB"/>
</dbReference>
<dbReference type="GO" id="GO:0007187">
    <property type="term" value="P:G protein-coupled receptor signaling pathway, coupled to cyclic nucleotide second messenger"/>
    <property type="evidence" value="ECO:0000304"/>
    <property type="project" value="ProtInc"/>
</dbReference>
<dbReference type="GO" id="GO:0007507">
    <property type="term" value="P:heart development"/>
    <property type="evidence" value="ECO:0007669"/>
    <property type="project" value="Ensembl"/>
</dbReference>
<dbReference type="GO" id="GO:1904707">
    <property type="term" value="P:positive regulation of vascular associated smooth muscle cell proliferation"/>
    <property type="evidence" value="ECO:0007669"/>
    <property type="project" value="Ensembl"/>
</dbReference>
<dbReference type="GO" id="GO:0015031">
    <property type="term" value="P:protein transport"/>
    <property type="evidence" value="ECO:0000314"/>
    <property type="project" value="UniProtKB"/>
</dbReference>
<dbReference type="GO" id="GO:0031623">
    <property type="term" value="P:receptor internalization"/>
    <property type="evidence" value="ECO:0000314"/>
    <property type="project" value="UniProtKB"/>
</dbReference>
<dbReference type="GO" id="GO:1990874">
    <property type="term" value="P:vascular associated smooth muscle cell proliferation"/>
    <property type="evidence" value="ECO:0007669"/>
    <property type="project" value="Ensembl"/>
</dbReference>
<dbReference type="CDD" id="cd15274">
    <property type="entry name" value="7tmB1_calcitonin_R"/>
    <property type="match status" value="1"/>
</dbReference>
<dbReference type="FunFam" id="1.20.1070.10:FF:000079">
    <property type="entry name" value="Calcitonin gene-related peptide type 1 receptor"/>
    <property type="match status" value="1"/>
</dbReference>
<dbReference type="FunFam" id="4.10.1240.10:FF:000011">
    <property type="entry name" value="Calcitonin gene-related peptide type 1 receptor"/>
    <property type="match status" value="1"/>
</dbReference>
<dbReference type="Gene3D" id="4.10.1240.10">
    <property type="entry name" value="GPCR, family 2, extracellular hormone receptor domain"/>
    <property type="match status" value="1"/>
</dbReference>
<dbReference type="Gene3D" id="1.20.1070.10">
    <property type="entry name" value="Rhodopsin 7-helix transmembrane proteins"/>
    <property type="match status" value="1"/>
</dbReference>
<dbReference type="InterPro" id="IPR050332">
    <property type="entry name" value="GPCR_2"/>
</dbReference>
<dbReference type="InterPro" id="IPR017981">
    <property type="entry name" value="GPCR_2-like_7TM"/>
</dbReference>
<dbReference type="InterPro" id="IPR003287">
    <property type="entry name" value="GPCR_2_calcitonin_rcpt_fam"/>
</dbReference>
<dbReference type="InterPro" id="IPR003289">
    <property type="entry name" value="GPCR_2_CGRP1_rcpt"/>
</dbReference>
<dbReference type="InterPro" id="IPR036445">
    <property type="entry name" value="GPCR_2_extracell_dom_sf"/>
</dbReference>
<dbReference type="InterPro" id="IPR001879">
    <property type="entry name" value="GPCR_2_extracellular_dom"/>
</dbReference>
<dbReference type="InterPro" id="IPR000832">
    <property type="entry name" value="GPCR_2_secretin-like"/>
</dbReference>
<dbReference type="InterPro" id="IPR017983">
    <property type="entry name" value="GPCR_2_secretin-like_CS"/>
</dbReference>
<dbReference type="PANTHER" id="PTHR45620:SF21">
    <property type="entry name" value="CALCITONIN GENE-RELATED PEPTIDE TYPE 1 RECEPTOR"/>
    <property type="match status" value="1"/>
</dbReference>
<dbReference type="PANTHER" id="PTHR45620">
    <property type="entry name" value="PDF RECEPTOR-LIKE PROTEIN-RELATED"/>
    <property type="match status" value="1"/>
</dbReference>
<dbReference type="Pfam" id="PF00002">
    <property type="entry name" value="7tm_2"/>
    <property type="match status" value="1"/>
</dbReference>
<dbReference type="Pfam" id="PF02793">
    <property type="entry name" value="HRM"/>
    <property type="match status" value="1"/>
</dbReference>
<dbReference type="PRINTS" id="PR01351">
    <property type="entry name" value="CGRPRECEPTOR"/>
</dbReference>
<dbReference type="PRINTS" id="PR01350">
    <property type="entry name" value="CTRFAMILY"/>
</dbReference>
<dbReference type="PRINTS" id="PR00249">
    <property type="entry name" value="GPCRSECRETIN"/>
</dbReference>
<dbReference type="SMART" id="SM00008">
    <property type="entry name" value="HormR"/>
    <property type="match status" value="1"/>
</dbReference>
<dbReference type="SUPFAM" id="SSF81321">
    <property type="entry name" value="Family A G protein-coupled receptor-like"/>
    <property type="match status" value="1"/>
</dbReference>
<dbReference type="SUPFAM" id="SSF111418">
    <property type="entry name" value="Hormone receptor domain"/>
    <property type="match status" value="1"/>
</dbReference>
<dbReference type="PROSITE" id="PS00649">
    <property type="entry name" value="G_PROTEIN_RECEP_F2_1"/>
    <property type="match status" value="1"/>
</dbReference>
<dbReference type="PROSITE" id="PS00650">
    <property type="entry name" value="G_PROTEIN_RECEP_F2_2"/>
    <property type="match status" value="1"/>
</dbReference>
<dbReference type="PROSITE" id="PS50227">
    <property type="entry name" value="G_PROTEIN_RECEP_F2_3"/>
    <property type="match status" value="1"/>
</dbReference>
<dbReference type="PROSITE" id="PS50261">
    <property type="entry name" value="G_PROTEIN_RECEP_F2_4"/>
    <property type="match status" value="1"/>
</dbReference>
<gene>
    <name evidence="16" type="primary">CALCRL</name>
    <name type="synonym">CGRPR</name>
</gene>
<name>CALRL_HUMAN</name>
<reference key="1">
    <citation type="journal article" date="1996" name="J. Biol. Chem.">
        <title>A cDNA encoding the calcitonin gene-related peptide type 1 receptor.</title>
        <authorList>
            <person name="Aiyar N."/>
            <person name="Rand K."/>
            <person name="Elshourbagy N.A."/>
            <person name="Zeng Z."/>
            <person name="Adamou J.E."/>
            <person name="Bergsma D.J."/>
            <person name="Li Y."/>
        </authorList>
    </citation>
    <scope>NUCLEOTIDE SEQUENCE [MRNA]</scope>
    <scope>VARIANT ASN-8</scope>
    <scope>FUNCTION</scope>
    <source>
        <tissue>Lung</tissue>
    </source>
</reference>
<reference key="2">
    <citation type="journal article" date="1995" name="Biochem. Biophys. Res. Commun.">
        <title>A human orphan calcitonin receptor-like structure.</title>
        <authorList>
            <person name="Fluehmann B."/>
            <person name="Muff R."/>
            <person name="Hunziker W."/>
            <person name="Fischer J.A."/>
            <person name="Born W."/>
        </authorList>
    </citation>
    <scope>NUCLEOTIDE SEQUENCE [MRNA]</scope>
    <scope>VARIANT ASN-8</scope>
    <scope>TISSUE SPECIFICITY</scope>
    <source>
        <tissue>Cerebellum</tissue>
    </source>
</reference>
<reference key="3">
    <citation type="submission" date="2003-09" db="EMBL/GenBank/DDBJ databases">
        <title>cDNA clones of human proteins involved in signal transduction sequenced by the Guthrie cDNA resource center (www.cdna.org).</title>
        <authorList>
            <person name="Kopatz S.A."/>
            <person name="Aronstam R.S."/>
            <person name="Sharma S.V."/>
        </authorList>
    </citation>
    <scope>NUCLEOTIDE SEQUENCE [LARGE SCALE MRNA]</scope>
    <scope>VARIANT ASN-8</scope>
    <source>
        <tissue>Heart</tissue>
    </source>
</reference>
<reference key="4">
    <citation type="journal article" date="2004" name="Nat. Genet.">
        <title>Complete sequencing and characterization of 21,243 full-length human cDNAs.</title>
        <authorList>
            <person name="Ota T."/>
            <person name="Suzuki Y."/>
            <person name="Nishikawa T."/>
            <person name="Otsuki T."/>
            <person name="Sugiyama T."/>
            <person name="Irie R."/>
            <person name="Wakamatsu A."/>
            <person name="Hayashi K."/>
            <person name="Sato H."/>
            <person name="Nagai K."/>
            <person name="Kimura K."/>
            <person name="Makita H."/>
            <person name="Sekine M."/>
            <person name="Obayashi M."/>
            <person name="Nishi T."/>
            <person name="Shibahara T."/>
            <person name="Tanaka T."/>
            <person name="Ishii S."/>
            <person name="Yamamoto J."/>
            <person name="Saito K."/>
            <person name="Kawai Y."/>
            <person name="Isono Y."/>
            <person name="Nakamura Y."/>
            <person name="Nagahari K."/>
            <person name="Murakami K."/>
            <person name="Yasuda T."/>
            <person name="Iwayanagi T."/>
            <person name="Wagatsuma M."/>
            <person name="Shiratori A."/>
            <person name="Sudo H."/>
            <person name="Hosoiri T."/>
            <person name="Kaku Y."/>
            <person name="Kodaira H."/>
            <person name="Kondo H."/>
            <person name="Sugawara M."/>
            <person name="Takahashi M."/>
            <person name="Kanda K."/>
            <person name="Yokoi T."/>
            <person name="Furuya T."/>
            <person name="Kikkawa E."/>
            <person name="Omura Y."/>
            <person name="Abe K."/>
            <person name="Kamihara K."/>
            <person name="Katsuta N."/>
            <person name="Sato K."/>
            <person name="Tanikawa M."/>
            <person name="Yamazaki M."/>
            <person name="Ninomiya K."/>
            <person name="Ishibashi T."/>
            <person name="Yamashita H."/>
            <person name="Murakawa K."/>
            <person name="Fujimori K."/>
            <person name="Tanai H."/>
            <person name="Kimata M."/>
            <person name="Watanabe M."/>
            <person name="Hiraoka S."/>
            <person name="Chiba Y."/>
            <person name="Ishida S."/>
            <person name="Ono Y."/>
            <person name="Takiguchi S."/>
            <person name="Watanabe S."/>
            <person name="Yosida M."/>
            <person name="Hotuta T."/>
            <person name="Kusano J."/>
            <person name="Kanehori K."/>
            <person name="Takahashi-Fujii A."/>
            <person name="Hara H."/>
            <person name="Tanase T.-O."/>
            <person name="Nomura Y."/>
            <person name="Togiya S."/>
            <person name="Komai F."/>
            <person name="Hara R."/>
            <person name="Takeuchi K."/>
            <person name="Arita M."/>
            <person name="Imose N."/>
            <person name="Musashino K."/>
            <person name="Yuuki H."/>
            <person name="Oshima A."/>
            <person name="Sasaki N."/>
            <person name="Aotsuka S."/>
            <person name="Yoshikawa Y."/>
            <person name="Matsunawa H."/>
            <person name="Ichihara T."/>
            <person name="Shiohata N."/>
            <person name="Sano S."/>
            <person name="Moriya S."/>
            <person name="Momiyama H."/>
            <person name="Satoh N."/>
            <person name="Takami S."/>
            <person name="Terashima Y."/>
            <person name="Suzuki O."/>
            <person name="Nakagawa S."/>
            <person name="Senoh A."/>
            <person name="Mizoguchi H."/>
            <person name="Goto Y."/>
            <person name="Shimizu F."/>
            <person name="Wakebe H."/>
            <person name="Hishigaki H."/>
            <person name="Watanabe T."/>
            <person name="Sugiyama A."/>
            <person name="Takemoto M."/>
            <person name="Kawakami B."/>
            <person name="Yamazaki M."/>
            <person name="Watanabe K."/>
            <person name="Kumagai A."/>
            <person name="Itakura S."/>
            <person name="Fukuzumi Y."/>
            <person name="Fujimori Y."/>
            <person name="Komiyama M."/>
            <person name="Tashiro H."/>
            <person name="Tanigami A."/>
            <person name="Fujiwara T."/>
            <person name="Ono T."/>
            <person name="Yamada K."/>
            <person name="Fujii Y."/>
            <person name="Ozaki K."/>
            <person name="Hirao M."/>
            <person name="Ohmori Y."/>
            <person name="Kawabata A."/>
            <person name="Hikiji T."/>
            <person name="Kobatake N."/>
            <person name="Inagaki H."/>
            <person name="Ikema Y."/>
            <person name="Okamoto S."/>
            <person name="Okitani R."/>
            <person name="Kawakami T."/>
            <person name="Noguchi S."/>
            <person name="Itoh T."/>
            <person name="Shigeta K."/>
            <person name="Senba T."/>
            <person name="Matsumura K."/>
            <person name="Nakajima Y."/>
            <person name="Mizuno T."/>
            <person name="Morinaga M."/>
            <person name="Sasaki M."/>
            <person name="Togashi T."/>
            <person name="Oyama M."/>
            <person name="Hata H."/>
            <person name="Watanabe M."/>
            <person name="Komatsu T."/>
            <person name="Mizushima-Sugano J."/>
            <person name="Satoh T."/>
            <person name="Shirai Y."/>
            <person name="Takahashi Y."/>
            <person name="Nakagawa K."/>
            <person name="Okumura K."/>
            <person name="Nagase T."/>
            <person name="Nomura N."/>
            <person name="Kikuchi H."/>
            <person name="Masuho Y."/>
            <person name="Yamashita R."/>
            <person name="Nakai K."/>
            <person name="Yada T."/>
            <person name="Nakamura Y."/>
            <person name="Ohara O."/>
            <person name="Isogai T."/>
            <person name="Sugano S."/>
        </authorList>
    </citation>
    <scope>NUCLEOTIDE SEQUENCE [LARGE SCALE MRNA]</scope>
    <source>
        <tissue>Placenta</tissue>
        <tissue>Trachea</tissue>
    </source>
</reference>
<reference key="5">
    <citation type="journal article" date="2005" name="Nature">
        <title>Generation and annotation of the DNA sequences of human chromosomes 2 and 4.</title>
        <authorList>
            <person name="Hillier L.W."/>
            <person name="Graves T.A."/>
            <person name="Fulton R.S."/>
            <person name="Fulton L.A."/>
            <person name="Pepin K.H."/>
            <person name="Minx P."/>
            <person name="Wagner-McPherson C."/>
            <person name="Layman D."/>
            <person name="Wylie K."/>
            <person name="Sekhon M."/>
            <person name="Becker M.C."/>
            <person name="Fewell G.A."/>
            <person name="Delehaunty K.D."/>
            <person name="Miner T.L."/>
            <person name="Nash W.E."/>
            <person name="Kremitzki C."/>
            <person name="Oddy L."/>
            <person name="Du H."/>
            <person name="Sun H."/>
            <person name="Bradshaw-Cordum H."/>
            <person name="Ali J."/>
            <person name="Carter J."/>
            <person name="Cordes M."/>
            <person name="Harris A."/>
            <person name="Isak A."/>
            <person name="van Brunt A."/>
            <person name="Nguyen C."/>
            <person name="Du F."/>
            <person name="Courtney L."/>
            <person name="Kalicki J."/>
            <person name="Ozersky P."/>
            <person name="Abbott S."/>
            <person name="Armstrong J."/>
            <person name="Belter E.A."/>
            <person name="Caruso L."/>
            <person name="Cedroni M."/>
            <person name="Cotton M."/>
            <person name="Davidson T."/>
            <person name="Desai A."/>
            <person name="Elliott G."/>
            <person name="Erb T."/>
            <person name="Fronick C."/>
            <person name="Gaige T."/>
            <person name="Haakenson W."/>
            <person name="Haglund K."/>
            <person name="Holmes A."/>
            <person name="Harkins R."/>
            <person name="Kim K."/>
            <person name="Kruchowski S.S."/>
            <person name="Strong C.M."/>
            <person name="Grewal N."/>
            <person name="Goyea E."/>
            <person name="Hou S."/>
            <person name="Levy A."/>
            <person name="Martinka S."/>
            <person name="Mead K."/>
            <person name="McLellan M.D."/>
            <person name="Meyer R."/>
            <person name="Randall-Maher J."/>
            <person name="Tomlinson C."/>
            <person name="Dauphin-Kohlberg S."/>
            <person name="Kozlowicz-Reilly A."/>
            <person name="Shah N."/>
            <person name="Swearengen-Shahid S."/>
            <person name="Snider J."/>
            <person name="Strong J.T."/>
            <person name="Thompson J."/>
            <person name="Yoakum M."/>
            <person name="Leonard S."/>
            <person name="Pearman C."/>
            <person name="Trani L."/>
            <person name="Radionenko M."/>
            <person name="Waligorski J.E."/>
            <person name="Wang C."/>
            <person name="Rock S.M."/>
            <person name="Tin-Wollam A.-M."/>
            <person name="Maupin R."/>
            <person name="Latreille P."/>
            <person name="Wendl M.C."/>
            <person name="Yang S.-P."/>
            <person name="Pohl C."/>
            <person name="Wallis J.W."/>
            <person name="Spieth J."/>
            <person name="Bieri T.A."/>
            <person name="Berkowicz N."/>
            <person name="Nelson J.O."/>
            <person name="Osborne J."/>
            <person name="Ding L."/>
            <person name="Meyer R."/>
            <person name="Sabo A."/>
            <person name="Shotland Y."/>
            <person name="Sinha P."/>
            <person name="Wohldmann P.E."/>
            <person name="Cook L.L."/>
            <person name="Hickenbotham M.T."/>
            <person name="Eldred J."/>
            <person name="Williams D."/>
            <person name="Jones T.A."/>
            <person name="She X."/>
            <person name="Ciccarelli F.D."/>
            <person name="Izaurralde E."/>
            <person name="Taylor J."/>
            <person name="Schmutz J."/>
            <person name="Myers R.M."/>
            <person name="Cox D.R."/>
            <person name="Huang X."/>
            <person name="McPherson J.D."/>
            <person name="Mardis E.R."/>
            <person name="Clifton S.W."/>
            <person name="Warren W.C."/>
            <person name="Chinwalla A.T."/>
            <person name="Eddy S.R."/>
            <person name="Marra M.A."/>
            <person name="Ovcharenko I."/>
            <person name="Furey T.S."/>
            <person name="Miller W."/>
            <person name="Eichler E.E."/>
            <person name="Bork P."/>
            <person name="Suyama M."/>
            <person name="Torrents D."/>
            <person name="Waterston R.H."/>
            <person name="Wilson R.K."/>
        </authorList>
    </citation>
    <scope>NUCLEOTIDE SEQUENCE [LARGE SCALE GENOMIC DNA]</scope>
</reference>
<reference key="6">
    <citation type="journal article" date="2004" name="Protein Sci.">
        <title>Signal peptide prediction based on analysis of experimentally verified cleavage sites.</title>
        <authorList>
            <person name="Zhang Z."/>
            <person name="Henzel W.J."/>
        </authorList>
    </citation>
    <scope>PROTEIN SEQUENCE OF 23-37</scope>
</reference>
<reference key="7">
    <citation type="journal article" date="1998" name="Nature">
        <title>RAMPs regulate the transport and ligand specificity of the calcitonin-receptor-like receptor.</title>
        <authorList>
            <person name="McLatchie L.M."/>
            <person name="Fraser N.J."/>
            <person name="Main M.J."/>
            <person name="Wise A."/>
            <person name="Brown J."/>
            <person name="Thompson N."/>
            <person name="Solari R."/>
            <person name="Lee M.G."/>
            <person name="Foord S.M."/>
        </authorList>
    </citation>
    <scope>FUNCTION</scope>
    <source>
        <tissue>Neuroblastoma</tissue>
    </source>
</reference>
<reference key="8">
    <citation type="journal article" date="2018" name="J. Exp. Med.">
        <title>hCALCRL mutation causes autosomal recessive nonimmune hydrops fetalis with lymphatic dysplasia.</title>
        <authorList>
            <person name="Mackie D.I."/>
            <person name="Al Mutairi F."/>
            <person name="Davis R.B."/>
            <person name="Kechele D.O."/>
            <person name="Nielsen N.R."/>
            <person name="Snyder J.C."/>
            <person name="Caron M.G."/>
            <person name="Kliman H.J."/>
            <person name="Berg J.S."/>
            <person name="Simms J."/>
            <person name="Poyner D.R."/>
            <person name="Caron K.M."/>
        </authorList>
    </citation>
    <scope>FUNCTION</scope>
    <scope>SUBCELLULAR LOCATION</scope>
    <scope>INTERACTION WITH RAMP2</scope>
    <scope>INVOLVEMENT IN LMPHM8</scope>
    <scope>VARIANT LMPHM8 VAL-205 DEL</scope>
    <scope>CHARACTERIZATION OF VARIANT LMPHM8 VAL-205 DEL</scope>
</reference>
<reference evidence="18 19 20" key="9">
    <citation type="journal article" date="2010" name="Structure">
        <title>Crystal structure of the ectodomain complex of the CGRP receptor, a class-B GPCR, reveals the site of drug antagonism.</title>
        <authorList>
            <person name="ter Haar E."/>
            <person name="Koth C.M."/>
            <person name="Abdul-Manan N."/>
            <person name="Swenson L."/>
            <person name="Coll J.T."/>
            <person name="Lippke J.A."/>
            <person name="Lepre C.A."/>
            <person name="Garcia-Guzman M."/>
            <person name="Moore J.M."/>
        </authorList>
    </citation>
    <scope>X-RAY CRYSTALLOGRAPHY (2.1 ANGSTROMS) OF 23-133 IN COMPLEX WITH RAMP1 AND ANTAGONIST</scope>
    <scope>SUBUNIT</scope>
    <scope>DISULFIDE BONDS</scope>
    <scope>INTERACTION WITH RAMP1</scope>
</reference>
<reference evidence="17" key="10">
    <citation type="journal article" date="2012" name="Protein Sci.">
        <title>Structural basis for extracellular interactions between calcitonin receptor-like receptor and receptor activity-modifying protein 2 for adrenomedullin-specific binding.</title>
        <authorList>
            <person name="Kusano S."/>
            <person name="Kukimoto-Niino M."/>
            <person name="Hino N."/>
            <person name="Ohsawa N."/>
            <person name="Okuda K."/>
            <person name="Sakamoto K."/>
            <person name="Shirouzu M."/>
            <person name="Shindo T."/>
            <person name="Yokoyama S."/>
        </authorList>
    </citation>
    <scope>X-RAY CRYSTALLOGRAPHY (2.6 ANGSTROMS) OF 23-136 IN COMPLEX WITH RAMP2</scope>
    <scope>FUNCTION</scope>
    <scope>MUTAGENESIS OF TRP-72; PHE-92 AND TRP-121</scope>
    <scope>DISULFIDE BONDS</scope>
    <scope>INTERACTION WITH RAMP2</scope>
</reference>
<reference evidence="21 22 23" key="11">
    <citation type="journal article" date="2020" name="ACS Pharmacol. Transl. Sci.">
        <title>Structure and Dynamics of Adrenomedullin Receptors AM1 and AM2 Reveal Key Mechanisms in the Control of Receptor Phenotype by Receptor Activity-Modifying Proteins.</title>
        <authorList>
            <person name="Liang Y.L."/>
            <person name="Belousoff M.J."/>
            <person name="Fletcher M.M."/>
            <person name="Zhang X."/>
            <person name="Khoshouei M."/>
            <person name="Deganutti G."/>
            <person name="Koole C."/>
            <person name="Furness S.G.B."/>
            <person name="Miller L.J."/>
            <person name="Hay D.L."/>
            <person name="Christopoulos A."/>
            <person name="Reynolds C.A."/>
            <person name="Danev R."/>
            <person name="Wootten D."/>
            <person name="Sexton P.M."/>
        </authorList>
    </citation>
    <scope>STRUCTURE BY ELECTRON MICROSCOPY (2.30 ANGSTROMS) OF 22-461 IN COMPLEX WITH ADM; ADM2; RAMP2; RAMP3 AND G PROTEINS</scope>
    <scope>DISULFIDE BONDS</scope>
    <scope>FUNCTION</scope>
    <scope>INTERACTION WITH RAMP2 AND RAMP3</scope>
</reference>
<reference evidence="24 25" key="12">
    <citation type="journal article" date="2021" name="Science">
        <title>Structure and dynamics of the CGRP receptor in apo and peptide-bound forms.</title>
        <authorList>
            <person name="Josephs T.M."/>
            <person name="Belousoff M.J."/>
            <person name="Liang Y.L."/>
            <person name="Piper S.J."/>
            <person name="Cao J."/>
            <person name="Garama D.J."/>
            <person name="Leach K."/>
            <person name="Gregory K.J."/>
            <person name="Christopoulos A."/>
            <person name="Hay D.L."/>
            <person name="Danev R."/>
            <person name="Wootten D."/>
            <person name="Sexton P.M."/>
        </authorList>
    </citation>
    <scope>STRUCTURE BY ELECTRON MICROSCOPY (3.15 ANGSTROMS) OF 22-461 IN COMPLEX WITH RAMP1; CALCA AND G PROTEINS</scope>
    <scope>DISULFIDE BONDS</scope>
    <scope>FUNCTION</scope>
    <scope>INTERACTION WITH RAMP1</scope>
</reference>
<feature type="signal peptide" evidence="3">
    <location>
        <begin position="1"/>
        <end position="22"/>
    </location>
</feature>
<feature type="chain" id="PRO_0000012811" description="Calcitonin gene-related peptide type 1 receptor">
    <location>
        <begin position="23"/>
        <end position="461"/>
    </location>
</feature>
<feature type="topological domain" description="Extracellular" evidence="15">
    <location>
        <begin position="23"/>
        <end position="139"/>
    </location>
</feature>
<feature type="transmembrane region" description="Helical; Name=1" evidence="7 21">
    <location>
        <begin position="140"/>
        <end position="164"/>
    </location>
</feature>
<feature type="topological domain" description="Cytoplasmic" evidence="15">
    <location>
        <begin position="165"/>
        <end position="175"/>
    </location>
</feature>
<feature type="transmembrane region" description="Helical; Name=2" evidence="7 21">
    <location>
        <begin position="176"/>
        <end position="198"/>
    </location>
</feature>
<feature type="topological domain" description="Extracellular" evidence="15">
    <location>
        <begin position="199"/>
        <end position="209"/>
    </location>
</feature>
<feature type="transmembrane region" description="Helical; Name=3" evidence="7 21">
    <location>
        <begin position="210"/>
        <end position="238"/>
    </location>
</feature>
<feature type="topological domain" description="Cytoplasmic" evidence="15">
    <location>
        <begin position="239"/>
        <end position="252"/>
    </location>
</feature>
<feature type="transmembrane region" description="Helical; Name=4" evidence="7 21">
    <location>
        <begin position="253"/>
        <end position="273"/>
    </location>
</feature>
<feature type="topological domain" description="Extracellular" evidence="15">
    <location>
        <begin position="274"/>
        <end position="289"/>
    </location>
</feature>
<feature type="transmembrane region" description="Helical; Name=5" evidence="7 21">
    <location>
        <begin position="290"/>
        <end position="314"/>
    </location>
</feature>
<feature type="topological domain" description="Cytoplasmic" evidence="15">
    <location>
        <begin position="315"/>
        <end position="329"/>
    </location>
</feature>
<feature type="transmembrane region" description="Helical; Name=6" evidence="7 21">
    <location>
        <begin position="330"/>
        <end position="351"/>
    </location>
</feature>
<feature type="topological domain" description="Extracellular" evidence="15">
    <location>
        <begin position="352"/>
        <end position="366"/>
    </location>
</feature>
<feature type="transmembrane region" description="Helical; Name=7" evidence="7 21">
    <location>
        <begin position="367"/>
        <end position="387"/>
    </location>
</feature>
<feature type="region of interest" description="Required for RAMP3 interaction" evidence="7">
    <location>
        <begin position="288"/>
        <end position="289"/>
    </location>
</feature>
<feature type="site" description="Required for ADM interaction" evidence="7">
    <location>
        <position position="202"/>
    </location>
</feature>
<feature type="site" description="Required for RAMP3 interaction" evidence="7">
    <location>
        <position position="250"/>
    </location>
</feature>
<feature type="site" description="Required for ADM2 interaction" evidence="7">
    <location>
        <position position="286"/>
    </location>
</feature>
<feature type="site" description="Required for RAMP2 interaction" evidence="7">
    <location>
        <position position="288"/>
    </location>
</feature>
<feature type="site" description="Required for ADM2 interaction" evidence="7">
    <location>
        <position position="295"/>
    </location>
</feature>
<feature type="site" description="Required for ADM2 interaction" evidence="7">
    <location>
        <position position="354"/>
    </location>
</feature>
<feature type="site" description="Required for ADM interaction" evidence="7">
    <location>
        <position position="373"/>
    </location>
</feature>
<feature type="modified residue" description="Phosphoserine" evidence="1">
    <location>
        <position position="420"/>
    </location>
</feature>
<feature type="modified residue" description="Phosphoserine" evidence="1">
    <location>
        <position position="445"/>
    </location>
</feature>
<feature type="glycosylation site" description="N-linked (GlcNAc...) asparagine" evidence="2">
    <location>
        <position position="66"/>
    </location>
</feature>
<feature type="glycosylation site" description="N-linked (GlcNAc...) asparagine" evidence="2">
    <location>
        <position position="118"/>
    </location>
</feature>
<feature type="glycosylation site" description="N-linked (GlcNAc...) asparagine" evidence="2">
    <location>
        <position position="123"/>
    </location>
</feature>
<feature type="disulfide bond" evidence="7 23">
    <location>
        <begin position="48"/>
        <end position="74"/>
    </location>
</feature>
<feature type="disulfide bond" evidence="7 23">
    <location>
        <begin position="65"/>
        <end position="105"/>
    </location>
</feature>
<feature type="disulfide bond" evidence="7 23">
    <location>
        <begin position="88"/>
        <end position="127"/>
    </location>
</feature>
<feature type="sequence variant" id="VAR_054822" description="In dbSNP:rs698577." evidence="9 10 12">
    <original>Y</original>
    <variation>N</variation>
    <location>
        <position position="8"/>
    </location>
</feature>
<feature type="sequence variant" id="VAR_049453" description="In dbSNP:rs13391909.">
    <original>F</original>
    <variation>L</variation>
    <location>
        <position position="16"/>
    </location>
</feature>
<feature type="sequence variant" id="VAR_083775" description="In LMPHM8; uncertain significance; decreased function in adenylate cyclase-modulating G protein-coupled receptor signaling pathway; decreased interaction with RAMP2; decreased protein levels at the cell membrane." evidence="6">
    <location>
        <position position="205"/>
    </location>
</feature>
<feature type="sequence variant" id="VAR_049454" description="In dbSNP:rs34010553.">
    <original>R</original>
    <variation>I</variation>
    <location>
        <position position="274"/>
    </location>
</feature>
<feature type="mutagenesis site" description="Strongly reduced affinity for adrenomedullin." evidence="5">
    <original>W</original>
    <variation>A</variation>
    <location>
        <position position="72"/>
    </location>
</feature>
<feature type="mutagenesis site" description="Strongly reduced affinity for adrenomedullin." evidence="5">
    <original>F</original>
    <variation>A</variation>
    <location>
        <position position="92"/>
    </location>
</feature>
<feature type="mutagenesis site" description="Strongly reduced affinity for adrenomedullin." evidence="5">
    <original>W</original>
    <variation>A</variation>
    <location>
        <position position="121"/>
    </location>
</feature>
<feature type="sequence conflict" description="In Ref. 4; BAF84319." evidence="15" ref="4">
    <original>L</original>
    <variation>Q</variation>
    <location>
        <position position="144"/>
    </location>
</feature>
<feature type="helix" evidence="32">
    <location>
        <begin position="35"/>
        <end position="54"/>
    </location>
</feature>
<feature type="strand" evidence="27">
    <location>
        <begin position="60"/>
        <end position="62"/>
    </location>
</feature>
<feature type="strand" evidence="26">
    <location>
        <begin position="63"/>
        <end position="65"/>
    </location>
</feature>
<feature type="strand" evidence="32">
    <location>
        <begin position="71"/>
        <end position="75"/>
    </location>
</feature>
<feature type="strand" evidence="29">
    <location>
        <begin position="77"/>
        <end position="79"/>
    </location>
</feature>
<feature type="strand" evidence="32">
    <location>
        <begin position="82"/>
        <end position="87"/>
    </location>
</feature>
<feature type="strand" evidence="31">
    <location>
        <begin position="90"/>
        <end position="92"/>
    </location>
</feature>
<feature type="strand" evidence="32">
    <location>
        <begin position="99"/>
        <end position="105"/>
    </location>
</feature>
<feature type="turn" evidence="29">
    <location>
        <begin position="107"/>
        <end position="109"/>
    </location>
</feature>
<feature type="turn" evidence="32">
    <location>
        <begin position="115"/>
        <end position="117"/>
    </location>
</feature>
<feature type="strand" evidence="34">
    <location>
        <begin position="118"/>
        <end position="120"/>
    </location>
</feature>
<feature type="helix" evidence="32">
    <location>
        <begin position="125"/>
        <end position="128"/>
    </location>
</feature>
<feature type="turn" evidence="33">
    <location>
        <begin position="131"/>
        <end position="133"/>
    </location>
</feature>
<feature type="helix" evidence="32">
    <location>
        <begin position="134"/>
        <end position="143"/>
    </location>
</feature>
<feature type="helix" evidence="34">
    <location>
        <begin position="148"/>
        <end position="165"/>
    </location>
</feature>
<feature type="helix" evidence="30">
    <location>
        <begin position="172"/>
        <end position="197"/>
    </location>
</feature>
<feature type="turn" evidence="30">
    <location>
        <begin position="198"/>
        <end position="200"/>
    </location>
</feature>
<feature type="turn" evidence="30">
    <location>
        <begin position="202"/>
        <end position="204"/>
    </location>
</feature>
<feature type="helix" evidence="30">
    <location>
        <begin position="205"/>
        <end position="207"/>
    </location>
</feature>
<feature type="helix" evidence="30">
    <location>
        <begin position="211"/>
        <end position="241"/>
    </location>
</feature>
<feature type="strand" evidence="34">
    <location>
        <begin position="244"/>
        <end position="246"/>
    </location>
</feature>
<feature type="helix" evidence="30">
    <location>
        <begin position="253"/>
        <end position="260"/>
    </location>
</feature>
<feature type="turn" evidence="30">
    <location>
        <begin position="261"/>
        <end position="263"/>
    </location>
</feature>
<feature type="helix" evidence="30">
    <location>
        <begin position="264"/>
        <end position="276"/>
    </location>
</feature>
<feature type="helix" evidence="30">
    <location>
        <begin position="281"/>
        <end position="283"/>
    </location>
</feature>
<feature type="helix" evidence="30">
    <location>
        <begin position="289"/>
        <end position="291"/>
    </location>
</feature>
<feature type="helix" evidence="30">
    <location>
        <begin position="292"/>
        <end position="320"/>
    </location>
</feature>
<feature type="helix" evidence="30">
    <location>
        <begin position="331"/>
        <end position="345"/>
    </location>
</feature>
<feature type="helix" evidence="30">
    <location>
        <begin position="347"/>
        <end position="349"/>
    </location>
</feature>
<feature type="strand" evidence="28">
    <location>
        <begin position="350"/>
        <end position="352"/>
    </location>
</feature>
<feature type="helix" evidence="30">
    <location>
        <begin position="364"/>
        <end position="384"/>
    </location>
</feature>
<feature type="turn" evidence="34">
    <location>
        <begin position="385"/>
        <end position="387"/>
    </location>
</feature>
<feature type="helix" evidence="30">
    <location>
        <begin position="389"/>
        <end position="398"/>
    </location>
</feature>
<feature type="turn" evidence="30">
    <location>
        <begin position="399"/>
        <end position="401"/>
    </location>
</feature>